<sequence>MQIKDLFSKKKYATIPSERPKRDIPEGLMNKCSKCGTIQYSKELDKNLKVCSSCGHHYRLSAWERIGMTLDDGRLYEYDADMESVDPLEFPGYKGKLEQQRQKNPNLREAVVTGEGTINGHPVVVAVMSFDFFSGSMGSVVGEKITRAIEAAHEKKLPLLIFSTSGGARMQESILSLMQMAKTSAALSMFQGAGGLFISVFTDPTMGGVSASFASLGDYNLAEPGALVGFAGRIVIEQTIRQKLPDNFQTAEFNMQHGQLDLVVHRKDMKTTLGKLLDMHTVREGLSHGG</sequence>
<dbReference type="EC" id="2.1.3.15" evidence="1"/>
<dbReference type="EMBL" id="CP001656">
    <property type="protein sequence ID" value="ACT03100.1"/>
    <property type="molecule type" value="Genomic_DNA"/>
</dbReference>
<dbReference type="RefSeq" id="WP_015846040.1">
    <property type="nucleotide sequence ID" value="NC_012914.1"/>
</dbReference>
<dbReference type="SMR" id="C6D8C0"/>
<dbReference type="STRING" id="324057.Pjdr2_4479"/>
<dbReference type="KEGG" id="pjd:Pjdr2_4479"/>
<dbReference type="eggNOG" id="COG0777">
    <property type="taxonomic scope" value="Bacteria"/>
</dbReference>
<dbReference type="HOGENOM" id="CLU_015486_1_0_9"/>
<dbReference type="OrthoDB" id="9772975at2"/>
<dbReference type="UniPathway" id="UPA00655">
    <property type="reaction ID" value="UER00711"/>
</dbReference>
<dbReference type="GO" id="GO:0009317">
    <property type="term" value="C:acetyl-CoA carboxylase complex"/>
    <property type="evidence" value="ECO:0007669"/>
    <property type="project" value="InterPro"/>
</dbReference>
<dbReference type="GO" id="GO:0003989">
    <property type="term" value="F:acetyl-CoA carboxylase activity"/>
    <property type="evidence" value="ECO:0007669"/>
    <property type="project" value="InterPro"/>
</dbReference>
<dbReference type="GO" id="GO:0005524">
    <property type="term" value="F:ATP binding"/>
    <property type="evidence" value="ECO:0007669"/>
    <property type="project" value="UniProtKB-KW"/>
</dbReference>
<dbReference type="GO" id="GO:0016743">
    <property type="term" value="F:carboxyl- or carbamoyltransferase activity"/>
    <property type="evidence" value="ECO:0007669"/>
    <property type="project" value="UniProtKB-UniRule"/>
</dbReference>
<dbReference type="GO" id="GO:0008270">
    <property type="term" value="F:zinc ion binding"/>
    <property type="evidence" value="ECO:0007669"/>
    <property type="project" value="UniProtKB-UniRule"/>
</dbReference>
<dbReference type="GO" id="GO:0006633">
    <property type="term" value="P:fatty acid biosynthetic process"/>
    <property type="evidence" value="ECO:0007669"/>
    <property type="project" value="UniProtKB-KW"/>
</dbReference>
<dbReference type="GO" id="GO:2001295">
    <property type="term" value="P:malonyl-CoA biosynthetic process"/>
    <property type="evidence" value="ECO:0007669"/>
    <property type="project" value="UniProtKB-UniRule"/>
</dbReference>
<dbReference type="Gene3D" id="3.90.226.10">
    <property type="entry name" value="2-enoyl-CoA Hydratase, Chain A, domain 1"/>
    <property type="match status" value="1"/>
</dbReference>
<dbReference type="HAMAP" id="MF_01395">
    <property type="entry name" value="AcetylCoA_CT_beta"/>
    <property type="match status" value="1"/>
</dbReference>
<dbReference type="InterPro" id="IPR034733">
    <property type="entry name" value="AcCoA_carboxyl_beta"/>
</dbReference>
<dbReference type="InterPro" id="IPR000438">
    <property type="entry name" value="Acetyl_CoA_COase_Trfase_b_su"/>
</dbReference>
<dbReference type="InterPro" id="IPR029045">
    <property type="entry name" value="ClpP/crotonase-like_dom_sf"/>
</dbReference>
<dbReference type="InterPro" id="IPR011762">
    <property type="entry name" value="COA_CT_N"/>
</dbReference>
<dbReference type="InterPro" id="IPR041010">
    <property type="entry name" value="Znf-ACC"/>
</dbReference>
<dbReference type="NCBIfam" id="TIGR00515">
    <property type="entry name" value="accD"/>
    <property type="match status" value="1"/>
</dbReference>
<dbReference type="PANTHER" id="PTHR42995">
    <property type="entry name" value="ACETYL-COENZYME A CARBOXYLASE CARBOXYL TRANSFERASE SUBUNIT BETA, CHLOROPLASTIC"/>
    <property type="match status" value="1"/>
</dbReference>
<dbReference type="PANTHER" id="PTHR42995:SF5">
    <property type="entry name" value="ACETYL-COENZYME A CARBOXYLASE CARBOXYL TRANSFERASE SUBUNIT BETA, CHLOROPLASTIC"/>
    <property type="match status" value="1"/>
</dbReference>
<dbReference type="Pfam" id="PF01039">
    <property type="entry name" value="Carboxyl_trans"/>
    <property type="match status" value="1"/>
</dbReference>
<dbReference type="Pfam" id="PF17848">
    <property type="entry name" value="Zn_ribbon_ACC"/>
    <property type="match status" value="1"/>
</dbReference>
<dbReference type="PRINTS" id="PR01070">
    <property type="entry name" value="ACCCTRFRASEB"/>
</dbReference>
<dbReference type="SUPFAM" id="SSF52096">
    <property type="entry name" value="ClpP/crotonase"/>
    <property type="match status" value="1"/>
</dbReference>
<dbReference type="PROSITE" id="PS50980">
    <property type="entry name" value="COA_CT_NTER"/>
    <property type="match status" value="1"/>
</dbReference>
<comment type="function">
    <text evidence="1">Component of the acetyl coenzyme A carboxylase (ACC) complex. Biotin carboxylase (BC) catalyzes the carboxylation of biotin on its carrier protein (BCCP) and then the CO(2) group is transferred by the transcarboxylase to acetyl-CoA to form malonyl-CoA.</text>
</comment>
<comment type="catalytic activity">
    <reaction evidence="1">
        <text>N(6)-carboxybiotinyl-L-lysyl-[protein] + acetyl-CoA = N(6)-biotinyl-L-lysyl-[protein] + malonyl-CoA</text>
        <dbReference type="Rhea" id="RHEA:54728"/>
        <dbReference type="Rhea" id="RHEA-COMP:10505"/>
        <dbReference type="Rhea" id="RHEA-COMP:10506"/>
        <dbReference type="ChEBI" id="CHEBI:57288"/>
        <dbReference type="ChEBI" id="CHEBI:57384"/>
        <dbReference type="ChEBI" id="CHEBI:83144"/>
        <dbReference type="ChEBI" id="CHEBI:83145"/>
        <dbReference type="EC" id="2.1.3.15"/>
    </reaction>
</comment>
<comment type="cofactor">
    <cofactor evidence="1">
        <name>Zn(2+)</name>
        <dbReference type="ChEBI" id="CHEBI:29105"/>
    </cofactor>
    <text evidence="1">Binds 1 zinc ion per subunit.</text>
</comment>
<comment type="pathway">
    <text evidence="1">Lipid metabolism; malonyl-CoA biosynthesis; malonyl-CoA from acetyl-CoA: step 1/1.</text>
</comment>
<comment type="subunit">
    <text evidence="1">Acetyl-CoA carboxylase is a heterohexamer composed of biotin carboxyl carrier protein (AccB), biotin carboxylase (AccC) and two subunits each of ACCase subunit alpha (AccA) and ACCase subunit beta (AccD).</text>
</comment>
<comment type="subcellular location">
    <subcellularLocation>
        <location evidence="1">Cytoplasm</location>
    </subcellularLocation>
</comment>
<comment type="similarity">
    <text evidence="1">Belongs to the AccD/PCCB family.</text>
</comment>
<proteinExistence type="inferred from homology"/>
<name>ACCD_PAESJ</name>
<accession>C6D8C0</accession>
<evidence type="ECO:0000255" key="1">
    <source>
        <dbReference type="HAMAP-Rule" id="MF_01395"/>
    </source>
</evidence>
<evidence type="ECO:0000255" key="2">
    <source>
        <dbReference type="PROSITE-ProRule" id="PRU01136"/>
    </source>
</evidence>
<protein>
    <recommendedName>
        <fullName evidence="1">Acetyl-coenzyme A carboxylase carboxyl transferase subunit beta</fullName>
        <shortName evidence="1">ACCase subunit beta</shortName>
        <shortName evidence="1">Acetyl-CoA carboxylase carboxyltransferase subunit beta</shortName>
        <ecNumber evidence="1">2.1.3.15</ecNumber>
    </recommendedName>
</protein>
<reference key="1">
    <citation type="journal article" date="2012" name="Stand. Genomic Sci.">
        <title>Complete genome sequence of Paenibacillus sp. strain JDR-2.</title>
        <authorList>
            <person name="Chow V."/>
            <person name="Nong G."/>
            <person name="St John F.J."/>
            <person name="Rice J.D."/>
            <person name="Dickstein E."/>
            <person name="Chertkov O."/>
            <person name="Bruce D."/>
            <person name="Detter C."/>
            <person name="Brettin T."/>
            <person name="Han J."/>
            <person name="Woyke T."/>
            <person name="Pitluck S."/>
            <person name="Nolan M."/>
            <person name="Pati A."/>
            <person name="Martin J."/>
            <person name="Copeland A."/>
            <person name="Land M.L."/>
            <person name="Goodwin L."/>
            <person name="Jones J.B."/>
            <person name="Ingram L.O."/>
            <person name="Shanmugam K.T."/>
            <person name="Preston J.F."/>
        </authorList>
    </citation>
    <scope>NUCLEOTIDE SEQUENCE [LARGE SCALE GENOMIC DNA]</scope>
    <source>
        <strain>JDR-2</strain>
    </source>
</reference>
<keyword id="KW-0067">ATP-binding</keyword>
<keyword id="KW-0963">Cytoplasm</keyword>
<keyword id="KW-0275">Fatty acid biosynthesis</keyword>
<keyword id="KW-0276">Fatty acid metabolism</keyword>
<keyword id="KW-0444">Lipid biosynthesis</keyword>
<keyword id="KW-0443">Lipid metabolism</keyword>
<keyword id="KW-0479">Metal-binding</keyword>
<keyword id="KW-0547">Nucleotide-binding</keyword>
<keyword id="KW-0808">Transferase</keyword>
<keyword id="KW-0862">Zinc</keyword>
<keyword id="KW-0863">Zinc-finger</keyword>
<gene>
    <name evidence="1" type="primary">accD</name>
    <name type="ordered locus">Pjdr2_4479</name>
</gene>
<organism>
    <name type="scientific">Paenibacillus sp. (strain JDR-2)</name>
    <dbReference type="NCBI Taxonomy" id="324057"/>
    <lineage>
        <taxon>Bacteria</taxon>
        <taxon>Bacillati</taxon>
        <taxon>Bacillota</taxon>
        <taxon>Bacilli</taxon>
        <taxon>Bacillales</taxon>
        <taxon>Paenibacillaceae</taxon>
        <taxon>Paenibacillus</taxon>
    </lineage>
</organism>
<feature type="chain" id="PRO_0000389810" description="Acetyl-coenzyme A carboxylase carboxyl transferase subunit beta">
    <location>
        <begin position="1"/>
        <end position="290"/>
    </location>
</feature>
<feature type="domain" description="CoA carboxyltransferase N-terminal" evidence="2">
    <location>
        <begin position="28"/>
        <end position="290"/>
    </location>
</feature>
<feature type="zinc finger region" description="C4-type" evidence="1">
    <location>
        <begin position="32"/>
        <end position="54"/>
    </location>
</feature>
<feature type="binding site" evidence="1">
    <location>
        <position position="32"/>
    </location>
    <ligand>
        <name>Zn(2+)</name>
        <dbReference type="ChEBI" id="CHEBI:29105"/>
    </ligand>
</feature>
<feature type="binding site" evidence="1">
    <location>
        <position position="35"/>
    </location>
    <ligand>
        <name>Zn(2+)</name>
        <dbReference type="ChEBI" id="CHEBI:29105"/>
    </ligand>
</feature>
<feature type="binding site" evidence="1">
    <location>
        <position position="51"/>
    </location>
    <ligand>
        <name>Zn(2+)</name>
        <dbReference type="ChEBI" id="CHEBI:29105"/>
    </ligand>
</feature>
<feature type="binding site" evidence="1">
    <location>
        <position position="54"/>
    </location>
    <ligand>
        <name>Zn(2+)</name>
        <dbReference type="ChEBI" id="CHEBI:29105"/>
    </ligand>
</feature>